<accession>A6H0Y3</accession>
<sequence length="887" mass="99446">MTSKEIRQQYLKFFESKGHLIVPSAPIVLKDDPTLMFNNSGMAQFKEYFLGNGTPKSPRIADTQKCLRVSGKHNDLEDVGFDTYHHTMFEMLGNWSFGDYFKKEAINWAWELLTEVYKIPKQNLYVSVFEGSKEDNVPFDQEAWDIWKGLIDEDRIILGNKKDNFWEMGDQGPCGPCSEIHVDLRTPEEKAQVSGKSLVNNDHPQVVEIWNNVFMEFNRKADGSLEKLPAQHVDTGMGFERLCMALQGKTSNYDTDVFTPLIEKVTQITGYKYTSNEVKNISEEQNKTNIAIRVIVDHVRAVAFAIADGQLPSNTGAGYVIRRILRRAIRYGFTFLDTKEPFITKLVAVLASQMGEFFPEIKSQQQLVTNVIREEEASFLRTLEQGLQLLDKVVAETKGKEVSGAKAFELYDTFGFPIDLTALILREKGYELDEAGFNAAMQEQKNRSRAASEVFTEDWSVLIPGNIETFVGYDKTENDVKITRIRKVNSKKDGILYQIVLDNTPFYPEGGGQVGDKGTLVSANDSSDSEQAKQTIDIIDTKKENNLILHFAKQLPENIETGFVAKVNTNLRASTSKNHSATHLMHLALRSILGTHVEQKGSLVNPDYLRFDFSHFSKVSDDQLRQVEASVNAQIEAQLQLTEHRNIPIKEALDKGAMALFGEKYGDNVRMIEFGESKELCGGIHVKNTAQIWHFKILSEGAVAAGIRRIEAITGDAVKAFYTNQENTLSEIKEVLKKPQDILKSVTSLQDDNVKLKKQIEQLLKEKIEGLKNTLVSEFQEINGINFLSKQVDLSMSSTKDLLQALGSLKPNSFVVLASIEENMPNIHCYIAKELVAGKGLNANVVIKELGKYIEGNGGGQPFFASGKGKNVSGIKEALQKAIEFVK</sequence>
<dbReference type="EC" id="6.1.1.7" evidence="1"/>
<dbReference type="EMBL" id="AM398681">
    <property type="protein sequence ID" value="CAL44007.1"/>
    <property type="molecule type" value="Genomic_DNA"/>
</dbReference>
<dbReference type="RefSeq" id="WP_011964045.1">
    <property type="nucleotide sequence ID" value="NC_009613.3"/>
</dbReference>
<dbReference type="RefSeq" id="YP_001296809.1">
    <property type="nucleotide sequence ID" value="NC_009613.3"/>
</dbReference>
<dbReference type="SMR" id="A6H0Y3"/>
<dbReference type="STRING" id="402612.FP1941"/>
<dbReference type="EnsemblBacteria" id="CAL44007">
    <property type="protein sequence ID" value="CAL44007"/>
    <property type="gene ID" value="FP1941"/>
</dbReference>
<dbReference type="GeneID" id="66551876"/>
<dbReference type="KEGG" id="fps:FP1941"/>
<dbReference type="PATRIC" id="fig|402612.5.peg.1966"/>
<dbReference type="eggNOG" id="COG0013">
    <property type="taxonomic scope" value="Bacteria"/>
</dbReference>
<dbReference type="HOGENOM" id="CLU_004485_1_1_10"/>
<dbReference type="OrthoDB" id="9803884at2"/>
<dbReference type="Proteomes" id="UP000006394">
    <property type="component" value="Chromosome"/>
</dbReference>
<dbReference type="GO" id="GO:0005737">
    <property type="term" value="C:cytoplasm"/>
    <property type="evidence" value="ECO:0007669"/>
    <property type="project" value="UniProtKB-SubCell"/>
</dbReference>
<dbReference type="GO" id="GO:0004813">
    <property type="term" value="F:alanine-tRNA ligase activity"/>
    <property type="evidence" value="ECO:0007669"/>
    <property type="project" value="UniProtKB-UniRule"/>
</dbReference>
<dbReference type="GO" id="GO:0002161">
    <property type="term" value="F:aminoacyl-tRNA deacylase activity"/>
    <property type="evidence" value="ECO:0007669"/>
    <property type="project" value="TreeGrafter"/>
</dbReference>
<dbReference type="GO" id="GO:0005524">
    <property type="term" value="F:ATP binding"/>
    <property type="evidence" value="ECO:0007669"/>
    <property type="project" value="UniProtKB-UniRule"/>
</dbReference>
<dbReference type="GO" id="GO:0000049">
    <property type="term" value="F:tRNA binding"/>
    <property type="evidence" value="ECO:0007669"/>
    <property type="project" value="UniProtKB-KW"/>
</dbReference>
<dbReference type="GO" id="GO:0008270">
    <property type="term" value="F:zinc ion binding"/>
    <property type="evidence" value="ECO:0007669"/>
    <property type="project" value="UniProtKB-UniRule"/>
</dbReference>
<dbReference type="GO" id="GO:0006419">
    <property type="term" value="P:alanyl-tRNA aminoacylation"/>
    <property type="evidence" value="ECO:0007669"/>
    <property type="project" value="UniProtKB-UniRule"/>
</dbReference>
<dbReference type="CDD" id="cd00673">
    <property type="entry name" value="AlaRS_core"/>
    <property type="match status" value="1"/>
</dbReference>
<dbReference type="FunFam" id="3.10.310.40:FF:000001">
    <property type="entry name" value="Alanine--tRNA ligase"/>
    <property type="match status" value="1"/>
</dbReference>
<dbReference type="FunFam" id="3.30.54.20:FF:000001">
    <property type="entry name" value="Alanine--tRNA ligase"/>
    <property type="match status" value="1"/>
</dbReference>
<dbReference type="FunFam" id="3.30.930.10:FF:000011">
    <property type="entry name" value="Alanine--tRNA ligase, cytoplasmic"/>
    <property type="match status" value="1"/>
</dbReference>
<dbReference type="FunFam" id="3.30.980.10:FF:000004">
    <property type="entry name" value="Alanine--tRNA ligase, cytoplasmic"/>
    <property type="match status" value="1"/>
</dbReference>
<dbReference type="Gene3D" id="2.40.30.130">
    <property type="match status" value="1"/>
</dbReference>
<dbReference type="Gene3D" id="3.10.310.40">
    <property type="match status" value="1"/>
</dbReference>
<dbReference type="Gene3D" id="3.30.54.20">
    <property type="match status" value="1"/>
</dbReference>
<dbReference type="Gene3D" id="3.30.930.10">
    <property type="entry name" value="Bira Bifunctional Protein, Domain 2"/>
    <property type="match status" value="1"/>
</dbReference>
<dbReference type="Gene3D" id="3.30.980.10">
    <property type="entry name" value="Threonyl-trna Synthetase, Chain A, domain 2"/>
    <property type="match status" value="1"/>
</dbReference>
<dbReference type="HAMAP" id="MF_00036_B">
    <property type="entry name" value="Ala_tRNA_synth_B"/>
    <property type="match status" value="1"/>
</dbReference>
<dbReference type="InterPro" id="IPR045864">
    <property type="entry name" value="aa-tRNA-synth_II/BPL/LPL"/>
</dbReference>
<dbReference type="InterPro" id="IPR002318">
    <property type="entry name" value="Ala-tRNA-lgiase_IIc"/>
</dbReference>
<dbReference type="InterPro" id="IPR018162">
    <property type="entry name" value="Ala-tRNA-ligase_IIc_anticod-bd"/>
</dbReference>
<dbReference type="InterPro" id="IPR018165">
    <property type="entry name" value="Ala-tRNA-synth_IIc_core"/>
</dbReference>
<dbReference type="InterPro" id="IPR018164">
    <property type="entry name" value="Ala-tRNA-synth_IIc_N"/>
</dbReference>
<dbReference type="InterPro" id="IPR050058">
    <property type="entry name" value="Ala-tRNA_ligase"/>
</dbReference>
<dbReference type="InterPro" id="IPR023033">
    <property type="entry name" value="Ala_tRNA_ligase_euk/bac"/>
</dbReference>
<dbReference type="InterPro" id="IPR003156">
    <property type="entry name" value="DHHA1_dom"/>
</dbReference>
<dbReference type="InterPro" id="IPR018163">
    <property type="entry name" value="Thr/Ala-tRNA-synth_IIc_edit"/>
</dbReference>
<dbReference type="InterPro" id="IPR009000">
    <property type="entry name" value="Transl_B-barrel_sf"/>
</dbReference>
<dbReference type="InterPro" id="IPR012947">
    <property type="entry name" value="tRNA_SAD"/>
</dbReference>
<dbReference type="NCBIfam" id="TIGR00344">
    <property type="entry name" value="alaS"/>
    <property type="match status" value="1"/>
</dbReference>
<dbReference type="PANTHER" id="PTHR11777:SF9">
    <property type="entry name" value="ALANINE--TRNA LIGASE, CYTOPLASMIC"/>
    <property type="match status" value="1"/>
</dbReference>
<dbReference type="PANTHER" id="PTHR11777">
    <property type="entry name" value="ALANYL-TRNA SYNTHETASE"/>
    <property type="match status" value="1"/>
</dbReference>
<dbReference type="Pfam" id="PF02272">
    <property type="entry name" value="DHHA1"/>
    <property type="match status" value="1"/>
</dbReference>
<dbReference type="Pfam" id="PF01411">
    <property type="entry name" value="tRNA-synt_2c"/>
    <property type="match status" value="1"/>
</dbReference>
<dbReference type="Pfam" id="PF07973">
    <property type="entry name" value="tRNA_SAD"/>
    <property type="match status" value="1"/>
</dbReference>
<dbReference type="PRINTS" id="PR00980">
    <property type="entry name" value="TRNASYNTHALA"/>
</dbReference>
<dbReference type="SMART" id="SM00863">
    <property type="entry name" value="tRNA_SAD"/>
    <property type="match status" value="1"/>
</dbReference>
<dbReference type="SUPFAM" id="SSF55681">
    <property type="entry name" value="Class II aaRS and biotin synthetases"/>
    <property type="match status" value="1"/>
</dbReference>
<dbReference type="SUPFAM" id="SSF101353">
    <property type="entry name" value="Putative anticodon-binding domain of alanyl-tRNA synthetase (AlaRS)"/>
    <property type="match status" value="1"/>
</dbReference>
<dbReference type="SUPFAM" id="SSF55186">
    <property type="entry name" value="ThrRS/AlaRS common domain"/>
    <property type="match status" value="1"/>
</dbReference>
<dbReference type="SUPFAM" id="SSF50447">
    <property type="entry name" value="Translation proteins"/>
    <property type="match status" value="1"/>
</dbReference>
<dbReference type="PROSITE" id="PS50860">
    <property type="entry name" value="AA_TRNA_LIGASE_II_ALA"/>
    <property type="match status" value="1"/>
</dbReference>
<evidence type="ECO:0000255" key="1">
    <source>
        <dbReference type="HAMAP-Rule" id="MF_00036"/>
    </source>
</evidence>
<name>SYA_FLAPJ</name>
<protein>
    <recommendedName>
        <fullName evidence="1">Alanine--tRNA ligase</fullName>
        <ecNumber evidence="1">6.1.1.7</ecNumber>
    </recommendedName>
    <alternativeName>
        <fullName evidence="1">Alanyl-tRNA synthetase</fullName>
        <shortName evidence="1">AlaRS</shortName>
    </alternativeName>
</protein>
<gene>
    <name evidence="1" type="primary">alaS</name>
    <name type="ordered locus">FP1941</name>
</gene>
<feature type="chain" id="PRO_0000347608" description="Alanine--tRNA ligase">
    <location>
        <begin position="1"/>
        <end position="887"/>
    </location>
</feature>
<feature type="binding site" evidence="1">
    <location>
        <position position="579"/>
    </location>
    <ligand>
        <name>Zn(2+)</name>
        <dbReference type="ChEBI" id="CHEBI:29105"/>
    </ligand>
</feature>
<feature type="binding site" evidence="1">
    <location>
        <position position="583"/>
    </location>
    <ligand>
        <name>Zn(2+)</name>
        <dbReference type="ChEBI" id="CHEBI:29105"/>
    </ligand>
</feature>
<feature type="binding site" evidence="1">
    <location>
        <position position="681"/>
    </location>
    <ligand>
        <name>Zn(2+)</name>
        <dbReference type="ChEBI" id="CHEBI:29105"/>
    </ligand>
</feature>
<feature type="binding site" evidence="1">
    <location>
        <position position="685"/>
    </location>
    <ligand>
        <name>Zn(2+)</name>
        <dbReference type="ChEBI" id="CHEBI:29105"/>
    </ligand>
</feature>
<proteinExistence type="inferred from homology"/>
<keyword id="KW-0030">Aminoacyl-tRNA synthetase</keyword>
<keyword id="KW-0067">ATP-binding</keyword>
<keyword id="KW-0963">Cytoplasm</keyword>
<keyword id="KW-0436">Ligase</keyword>
<keyword id="KW-0479">Metal-binding</keyword>
<keyword id="KW-0547">Nucleotide-binding</keyword>
<keyword id="KW-0648">Protein biosynthesis</keyword>
<keyword id="KW-1185">Reference proteome</keyword>
<keyword id="KW-0694">RNA-binding</keyword>
<keyword id="KW-0820">tRNA-binding</keyword>
<keyword id="KW-0862">Zinc</keyword>
<organism>
    <name type="scientific">Flavobacterium psychrophilum (strain ATCC 49511 / DSM 21280 / CIP 103535 / JIP02/86)</name>
    <dbReference type="NCBI Taxonomy" id="402612"/>
    <lineage>
        <taxon>Bacteria</taxon>
        <taxon>Pseudomonadati</taxon>
        <taxon>Bacteroidota</taxon>
        <taxon>Flavobacteriia</taxon>
        <taxon>Flavobacteriales</taxon>
        <taxon>Flavobacteriaceae</taxon>
        <taxon>Flavobacterium</taxon>
    </lineage>
</organism>
<comment type="function">
    <text evidence="1">Catalyzes the attachment of alanine to tRNA(Ala) in a two-step reaction: alanine is first activated by ATP to form Ala-AMP and then transferred to the acceptor end of tRNA(Ala). Also edits incorrectly charged Ser-tRNA(Ala) and Gly-tRNA(Ala) via its editing domain.</text>
</comment>
<comment type="catalytic activity">
    <reaction evidence="1">
        <text>tRNA(Ala) + L-alanine + ATP = L-alanyl-tRNA(Ala) + AMP + diphosphate</text>
        <dbReference type="Rhea" id="RHEA:12540"/>
        <dbReference type="Rhea" id="RHEA-COMP:9657"/>
        <dbReference type="Rhea" id="RHEA-COMP:9923"/>
        <dbReference type="ChEBI" id="CHEBI:30616"/>
        <dbReference type="ChEBI" id="CHEBI:33019"/>
        <dbReference type="ChEBI" id="CHEBI:57972"/>
        <dbReference type="ChEBI" id="CHEBI:78442"/>
        <dbReference type="ChEBI" id="CHEBI:78497"/>
        <dbReference type="ChEBI" id="CHEBI:456215"/>
        <dbReference type="EC" id="6.1.1.7"/>
    </reaction>
</comment>
<comment type="cofactor">
    <cofactor evidence="1">
        <name>Zn(2+)</name>
        <dbReference type="ChEBI" id="CHEBI:29105"/>
    </cofactor>
    <text evidence="1">Binds 1 zinc ion per subunit.</text>
</comment>
<comment type="subcellular location">
    <subcellularLocation>
        <location evidence="1">Cytoplasm</location>
    </subcellularLocation>
</comment>
<comment type="domain">
    <text evidence="1">Consists of three domains; the N-terminal catalytic domain, the editing domain and the C-terminal C-Ala domain. The editing domain removes incorrectly charged amino acids, while the C-Ala domain, along with tRNA(Ala), serves as a bridge to cooperatively bring together the editing and aminoacylation centers thus stimulating deacylation of misacylated tRNAs.</text>
</comment>
<comment type="similarity">
    <text evidence="1">Belongs to the class-II aminoacyl-tRNA synthetase family.</text>
</comment>
<reference key="1">
    <citation type="journal article" date="2007" name="Nat. Biotechnol.">
        <title>Complete genome sequence of the fish pathogen Flavobacterium psychrophilum.</title>
        <authorList>
            <person name="Duchaud E."/>
            <person name="Boussaha M."/>
            <person name="Loux V."/>
            <person name="Bernardet J.-F."/>
            <person name="Michel C."/>
            <person name="Kerouault B."/>
            <person name="Mondot S."/>
            <person name="Nicolas P."/>
            <person name="Bossy R."/>
            <person name="Caron C."/>
            <person name="Bessieres P."/>
            <person name="Gibrat J.-F."/>
            <person name="Claverol S."/>
            <person name="Dumetz F."/>
            <person name="Le Henaff M."/>
            <person name="Benmansour A."/>
        </authorList>
    </citation>
    <scope>NUCLEOTIDE SEQUENCE [LARGE SCALE GENOMIC DNA]</scope>
    <source>
        <strain>ATCC 49511 / DSM 21280 / CIP 103535 / JIP02/86</strain>
    </source>
</reference>